<comment type="function">
    <text evidence="1">Involved in the biosynthesis of branched-chain amino acids (BCAA). Catalyzes an alkyl-migration followed by a ketol-acid reduction of (S)-2-acetolactate (S2AL) to yield (R)-2,3-dihydroxy-isovalerate. In the isomerase reaction, S2AL is rearranged via a Mg-dependent methyl migration to produce 3-hydroxy-3-methyl-2-ketobutyrate (HMKB). In the reductase reaction, this 2-ketoacid undergoes a metal-dependent reduction by NADPH to yield (R)-2,3-dihydroxy-isovalerate.</text>
</comment>
<comment type="catalytic activity">
    <reaction evidence="1">
        <text>(2R)-2,3-dihydroxy-3-methylbutanoate + NADP(+) = (2S)-2-acetolactate + NADPH + H(+)</text>
        <dbReference type="Rhea" id="RHEA:22068"/>
        <dbReference type="ChEBI" id="CHEBI:15378"/>
        <dbReference type="ChEBI" id="CHEBI:49072"/>
        <dbReference type="ChEBI" id="CHEBI:57783"/>
        <dbReference type="ChEBI" id="CHEBI:58349"/>
        <dbReference type="ChEBI" id="CHEBI:58476"/>
        <dbReference type="EC" id="1.1.1.86"/>
    </reaction>
</comment>
<comment type="catalytic activity">
    <reaction evidence="1">
        <text>(2R,3R)-2,3-dihydroxy-3-methylpentanoate + NADP(+) = (S)-2-ethyl-2-hydroxy-3-oxobutanoate + NADPH + H(+)</text>
        <dbReference type="Rhea" id="RHEA:13493"/>
        <dbReference type="ChEBI" id="CHEBI:15378"/>
        <dbReference type="ChEBI" id="CHEBI:49256"/>
        <dbReference type="ChEBI" id="CHEBI:49258"/>
        <dbReference type="ChEBI" id="CHEBI:57783"/>
        <dbReference type="ChEBI" id="CHEBI:58349"/>
        <dbReference type="EC" id="1.1.1.86"/>
    </reaction>
</comment>
<comment type="cofactor">
    <cofactor evidence="1">
        <name>Mg(2+)</name>
        <dbReference type="ChEBI" id="CHEBI:18420"/>
    </cofactor>
    <text evidence="1">Binds 2 magnesium ions per subunit.</text>
</comment>
<comment type="pathway">
    <text evidence="1">Amino-acid biosynthesis; L-isoleucine biosynthesis; L-isoleucine from 2-oxobutanoate: step 2/4.</text>
</comment>
<comment type="pathway">
    <text evidence="1">Amino-acid biosynthesis; L-valine biosynthesis; L-valine from pyruvate: step 2/4.</text>
</comment>
<comment type="similarity">
    <text evidence="1">Belongs to the ketol-acid reductoisomerase family.</text>
</comment>
<protein>
    <recommendedName>
        <fullName evidence="1">Ketol-acid reductoisomerase (NADP(+))</fullName>
        <shortName evidence="1">KARI</shortName>
        <ecNumber evidence="1">1.1.1.86</ecNumber>
    </recommendedName>
    <alternativeName>
        <fullName evidence="1">Acetohydroxy-acid isomeroreductase</fullName>
        <shortName evidence="1">AHIR</shortName>
    </alternativeName>
    <alternativeName>
        <fullName evidence="1">Alpha-keto-beta-hydroxylacyl reductoisomerase</fullName>
    </alternativeName>
    <alternativeName>
        <fullName evidence="1">Ketol-acid reductoisomerase type 1</fullName>
    </alternativeName>
    <alternativeName>
        <fullName evidence="1">Ketol-acid reductoisomerase type I</fullName>
    </alternativeName>
</protein>
<proteinExistence type="evidence at protein level"/>
<keyword id="KW-0002">3D-structure</keyword>
<keyword id="KW-0028">Amino-acid biosynthesis</keyword>
<keyword id="KW-0100">Branched-chain amino acid biosynthesis</keyword>
<keyword id="KW-0460">Magnesium</keyword>
<keyword id="KW-0479">Metal-binding</keyword>
<keyword id="KW-0521">NADP</keyword>
<keyword id="KW-0560">Oxidoreductase</keyword>
<keyword id="KW-1185">Reference proteome</keyword>
<accession>Q5SJ03</accession>
<gene>
    <name evidence="1" type="primary">ilvC</name>
    <name type="ordered locus">TTHA1211</name>
</gene>
<organism>
    <name type="scientific">Thermus thermophilus (strain ATCC 27634 / DSM 579 / HB8)</name>
    <dbReference type="NCBI Taxonomy" id="300852"/>
    <lineage>
        <taxon>Bacteria</taxon>
        <taxon>Thermotogati</taxon>
        <taxon>Deinococcota</taxon>
        <taxon>Deinococci</taxon>
        <taxon>Thermales</taxon>
        <taxon>Thermaceae</taxon>
        <taxon>Thermus</taxon>
    </lineage>
</organism>
<dbReference type="EC" id="1.1.1.86" evidence="1"/>
<dbReference type="EMBL" id="AP008226">
    <property type="protein sequence ID" value="BAD71034.1"/>
    <property type="molecule type" value="Genomic_DNA"/>
</dbReference>
<dbReference type="RefSeq" id="WP_011173279.1">
    <property type="nucleotide sequence ID" value="NC_006461.1"/>
</dbReference>
<dbReference type="RefSeq" id="YP_144477.1">
    <property type="nucleotide sequence ID" value="NC_006461.1"/>
</dbReference>
<dbReference type="PDB" id="8PVE">
    <property type="method" value="EM"/>
    <property type="resolution" value="3.30 A"/>
    <property type="chains" value="A=1-325"/>
</dbReference>
<dbReference type="PDBsum" id="8PVE"/>
<dbReference type="SMR" id="Q5SJ03"/>
<dbReference type="EnsemblBacteria" id="BAD71034">
    <property type="protein sequence ID" value="BAD71034"/>
    <property type="gene ID" value="BAD71034"/>
</dbReference>
<dbReference type="GeneID" id="3169032"/>
<dbReference type="KEGG" id="ttj:TTHA1211"/>
<dbReference type="PATRIC" id="fig|300852.9.peg.1192"/>
<dbReference type="eggNOG" id="COG0059">
    <property type="taxonomic scope" value="Bacteria"/>
</dbReference>
<dbReference type="HOGENOM" id="CLU_033821_0_1_0"/>
<dbReference type="PhylomeDB" id="Q5SJ03"/>
<dbReference type="UniPathway" id="UPA00047">
    <property type="reaction ID" value="UER00056"/>
</dbReference>
<dbReference type="UniPathway" id="UPA00049">
    <property type="reaction ID" value="UER00060"/>
</dbReference>
<dbReference type="Proteomes" id="UP000000532">
    <property type="component" value="Chromosome"/>
</dbReference>
<dbReference type="GO" id="GO:0005829">
    <property type="term" value="C:cytosol"/>
    <property type="evidence" value="ECO:0007669"/>
    <property type="project" value="TreeGrafter"/>
</dbReference>
<dbReference type="GO" id="GO:0004455">
    <property type="term" value="F:ketol-acid reductoisomerase activity"/>
    <property type="evidence" value="ECO:0007669"/>
    <property type="project" value="UniProtKB-UniRule"/>
</dbReference>
<dbReference type="GO" id="GO:0000287">
    <property type="term" value="F:magnesium ion binding"/>
    <property type="evidence" value="ECO:0007669"/>
    <property type="project" value="UniProtKB-UniRule"/>
</dbReference>
<dbReference type="GO" id="GO:0050661">
    <property type="term" value="F:NADP binding"/>
    <property type="evidence" value="ECO:0007669"/>
    <property type="project" value="InterPro"/>
</dbReference>
<dbReference type="GO" id="GO:0009097">
    <property type="term" value="P:isoleucine biosynthetic process"/>
    <property type="evidence" value="ECO:0007669"/>
    <property type="project" value="UniProtKB-UniRule"/>
</dbReference>
<dbReference type="GO" id="GO:0009099">
    <property type="term" value="P:L-valine biosynthetic process"/>
    <property type="evidence" value="ECO:0007669"/>
    <property type="project" value="UniProtKB-UniRule"/>
</dbReference>
<dbReference type="FunFam" id="3.40.50.720:FF:000023">
    <property type="entry name" value="Ketol-acid reductoisomerase (NADP(+))"/>
    <property type="match status" value="1"/>
</dbReference>
<dbReference type="Gene3D" id="6.10.240.10">
    <property type="match status" value="1"/>
</dbReference>
<dbReference type="Gene3D" id="3.40.50.720">
    <property type="entry name" value="NAD(P)-binding Rossmann-like Domain"/>
    <property type="match status" value="1"/>
</dbReference>
<dbReference type="HAMAP" id="MF_00435">
    <property type="entry name" value="IlvC"/>
    <property type="match status" value="1"/>
</dbReference>
<dbReference type="InterPro" id="IPR008927">
    <property type="entry name" value="6-PGluconate_DH-like_C_sf"/>
</dbReference>
<dbReference type="InterPro" id="IPR013023">
    <property type="entry name" value="KARI"/>
</dbReference>
<dbReference type="InterPro" id="IPR000506">
    <property type="entry name" value="KARI_C"/>
</dbReference>
<dbReference type="InterPro" id="IPR013116">
    <property type="entry name" value="KARI_N"/>
</dbReference>
<dbReference type="InterPro" id="IPR014359">
    <property type="entry name" value="KARI_prok"/>
</dbReference>
<dbReference type="InterPro" id="IPR036291">
    <property type="entry name" value="NAD(P)-bd_dom_sf"/>
</dbReference>
<dbReference type="NCBIfam" id="TIGR00465">
    <property type="entry name" value="ilvC"/>
    <property type="match status" value="1"/>
</dbReference>
<dbReference type="NCBIfam" id="NF004017">
    <property type="entry name" value="PRK05479.1"/>
    <property type="match status" value="1"/>
</dbReference>
<dbReference type="NCBIfam" id="NF009940">
    <property type="entry name" value="PRK13403.1"/>
    <property type="match status" value="1"/>
</dbReference>
<dbReference type="PANTHER" id="PTHR21371">
    <property type="entry name" value="KETOL-ACID REDUCTOISOMERASE, MITOCHONDRIAL"/>
    <property type="match status" value="1"/>
</dbReference>
<dbReference type="PANTHER" id="PTHR21371:SF1">
    <property type="entry name" value="KETOL-ACID REDUCTOISOMERASE, MITOCHONDRIAL"/>
    <property type="match status" value="1"/>
</dbReference>
<dbReference type="Pfam" id="PF01450">
    <property type="entry name" value="KARI_C"/>
    <property type="match status" value="1"/>
</dbReference>
<dbReference type="Pfam" id="PF07991">
    <property type="entry name" value="KARI_N"/>
    <property type="match status" value="1"/>
</dbReference>
<dbReference type="PIRSF" id="PIRSF000116">
    <property type="entry name" value="IlvC_gammaproteo"/>
    <property type="match status" value="1"/>
</dbReference>
<dbReference type="SUPFAM" id="SSF48179">
    <property type="entry name" value="6-phosphogluconate dehydrogenase C-terminal domain-like"/>
    <property type="match status" value="1"/>
</dbReference>
<dbReference type="SUPFAM" id="SSF51735">
    <property type="entry name" value="NAD(P)-binding Rossmann-fold domains"/>
    <property type="match status" value="1"/>
</dbReference>
<dbReference type="PROSITE" id="PS51851">
    <property type="entry name" value="KARI_C"/>
    <property type="match status" value="1"/>
</dbReference>
<dbReference type="PROSITE" id="PS51850">
    <property type="entry name" value="KARI_N"/>
    <property type="match status" value="1"/>
</dbReference>
<feature type="chain" id="PRO_0000226209" description="Ketol-acid reductoisomerase (NADP(+))">
    <location>
        <begin position="1"/>
        <end position="337"/>
    </location>
</feature>
<feature type="domain" description="KARI N-terminal Rossmann" evidence="2">
    <location>
        <begin position="1"/>
        <end position="181"/>
    </location>
</feature>
<feature type="domain" description="KARI C-terminal knotted" evidence="3">
    <location>
        <begin position="182"/>
        <end position="328"/>
    </location>
</feature>
<feature type="active site" evidence="1">
    <location>
        <position position="107"/>
    </location>
</feature>
<feature type="binding site" evidence="1">
    <location>
        <begin position="24"/>
        <end position="27"/>
    </location>
    <ligand>
        <name>NADP(+)</name>
        <dbReference type="ChEBI" id="CHEBI:58349"/>
    </ligand>
</feature>
<feature type="binding site" evidence="1">
    <location>
        <position position="47"/>
    </location>
    <ligand>
        <name>NADP(+)</name>
        <dbReference type="ChEBI" id="CHEBI:58349"/>
    </ligand>
</feature>
<feature type="binding site" evidence="1">
    <location>
        <position position="50"/>
    </location>
    <ligand>
        <name>NADP(+)</name>
        <dbReference type="ChEBI" id="CHEBI:58349"/>
    </ligand>
</feature>
<feature type="binding site" evidence="1">
    <location>
        <position position="52"/>
    </location>
    <ligand>
        <name>NADP(+)</name>
        <dbReference type="ChEBI" id="CHEBI:58349"/>
    </ligand>
</feature>
<feature type="binding site" evidence="1">
    <location>
        <begin position="82"/>
        <end position="85"/>
    </location>
    <ligand>
        <name>NADP(+)</name>
        <dbReference type="ChEBI" id="CHEBI:58349"/>
    </ligand>
</feature>
<feature type="binding site" evidence="1">
    <location>
        <position position="133"/>
    </location>
    <ligand>
        <name>NADP(+)</name>
        <dbReference type="ChEBI" id="CHEBI:58349"/>
    </ligand>
</feature>
<feature type="binding site" evidence="1">
    <location>
        <position position="190"/>
    </location>
    <ligand>
        <name>Mg(2+)</name>
        <dbReference type="ChEBI" id="CHEBI:18420"/>
        <label>1</label>
    </ligand>
</feature>
<feature type="binding site" evidence="1">
    <location>
        <position position="190"/>
    </location>
    <ligand>
        <name>Mg(2+)</name>
        <dbReference type="ChEBI" id="CHEBI:18420"/>
        <label>2</label>
    </ligand>
</feature>
<feature type="binding site" evidence="1">
    <location>
        <position position="194"/>
    </location>
    <ligand>
        <name>Mg(2+)</name>
        <dbReference type="ChEBI" id="CHEBI:18420"/>
        <label>1</label>
    </ligand>
</feature>
<feature type="binding site" evidence="1">
    <location>
        <position position="226"/>
    </location>
    <ligand>
        <name>Mg(2+)</name>
        <dbReference type="ChEBI" id="CHEBI:18420"/>
        <label>2</label>
    </ligand>
</feature>
<feature type="binding site" evidence="1">
    <location>
        <position position="230"/>
    </location>
    <ligand>
        <name>Mg(2+)</name>
        <dbReference type="ChEBI" id="CHEBI:18420"/>
        <label>2</label>
    </ligand>
</feature>
<feature type="binding site" evidence="1">
    <location>
        <position position="251"/>
    </location>
    <ligand>
        <name>substrate</name>
    </ligand>
</feature>
<feature type="helix" evidence="4">
    <location>
        <begin position="6"/>
        <end position="8"/>
    </location>
</feature>
<feature type="helix" evidence="4">
    <location>
        <begin position="12"/>
        <end position="15"/>
    </location>
</feature>
<feature type="strand" evidence="4">
    <location>
        <begin position="19"/>
        <end position="22"/>
    </location>
</feature>
<feature type="helix" evidence="4">
    <location>
        <begin position="26"/>
        <end position="36"/>
    </location>
</feature>
<feature type="turn" evidence="4">
    <location>
        <begin position="37"/>
        <end position="39"/>
    </location>
</feature>
<feature type="strand" evidence="4">
    <location>
        <begin position="42"/>
        <end position="46"/>
    </location>
</feature>
<feature type="helix" evidence="4">
    <location>
        <begin position="51"/>
        <end position="58"/>
    </location>
</feature>
<feature type="strand" evidence="4">
    <location>
        <begin position="63"/>
        <end position="65"/>
    </location>
</feature>
<feature type="helix" evidence="4">
    <location>
        <begin position="66"/>
        <end position="71"/>
    </location>
</feature>
<feature type="strand" evidence="4">
    <location>
        <begin position="74"/>
        <end position="78"/>
    </location>
</feature>
<feature type="helix" evidence="4">
    <location>
        <begin position="82"/>
        <end position="92"/>
    </location>
</feature>
<feature type="turn" evidence="4">
    <location>
        <begin position="93"/>
        <end position="96"/>
    </location>
</feature>
<feature type="strand" evidence="4">
    <location>
        <begin position="102"/>
        <end position="106"/>
    </location>
</feature>
<feature type="helix" evidence="4">
    <location>
        <begin position="109"/>
        <end position="112"/>
    </location>
</feature>
<feature type="strand" evidence="4">
    <location>
        <begin position="122"/>
        <end position="129"/>
    </location>
</feature>
<feature type="strand" evidence="4">
    <location>
        <begin position="148"/>
        <end position="154"/>
    </location>
</feature>
<feature type="strand" evidence="4">
    <location>
        <begin position="156"/>
        <end position="158"/>
    </location>
</feature>
<feature type="helix" evidence="4">
    <location>
        <begin position="160"/>
        <end position="170"/>
    </location>
</feature>
<feature type="strand" evidence="4">
    <location>
        <begin position="178"/>
        <end position="180"/>
    </location>
</feature>
<feature type="helix" evidence="4">
    <location>
        <begin position="183"/>
        <end position="196"/>
    </location>
</feature>
<feature type="turn" evidence="4">
    <location>
        <begin position="197"/>
        <end position="199"/>
    </location>
</feature>
<feature type="helix" evidence="4">
    <location>
        <begin position="200"/>
        <end position="215"/>
    </location>
</feature>
<feature type="helix" evidence="4">
    <location>
        <begin position="220"/>
        <end position="227"/>
    </location>
</feature>
<feature type="turn" evidence="4">
    <location>
        <begin position="228"/>
        <end position="230"/>
    </location>
</feature>
<feature type="helix" evidence="4">
    <location>
        <begin position="231"/>
        <end position="249"/>
    </location>
</feature>
<feature type="helix" evidence="4">
    <location>
        <begin position="252"/>
        <end position="265"/>
    </location>
</feature>
<feature type="helix" evidence="4">
    <location>
        <begin position="268"/>
        <end position="283"/>
    </location>
</feature>
<feature type="helix" evidence="4">
    <location>
        <begin position="286"/>
        <end position="296"/>
    </location>
</feature>
<feature type="helix" evidence="4">
    <location>
        <begin position="300"/>
        <end position="310"/>
    </location>
</feature>
<feature type="helix" evidence="4">
    <location>
        <begin position="313"/>
        <end position="325"/>
    </location>
</feature>
<evidence type="ECO:0000255" key="1">
    <source>
        <dbReference type="HAMAP-Rule" id="MF_00435"/>
    </source>
</evidence>
<evidence type="ECO:0000255" key="2">
    <source>
        <dbReference type="PROSITE-ProRule" id="PRU01197"/>
    </source>
</evidence>
<evidence type="ECO:0000255" key="3">
    <source>
        <dbReference type="PROSITE-ProRule" id="PRU01198"/>
    </source>
</evidence>
<evidence type="ECO:0007829" key="4">
    <source>
        <dbReference type="PDB" id="8PVE"/>
    </source>
</evidence>
<sequence length="337" mass="37078">MKIYYEHDADLGFILGKKVAVLGFGSQGHAHALNLKDSGVDVRVGLRKGSRSWEKAEAAGLRVLPVAEAVREADVVMVLLPDEKQAQVYREEVEPNLKEGGALAFAHGFNVHFGQIKPRKDLDVWMVAPKGPGHLVRSEYQKGSGVPALVAVHQDASGSAFPTALAYAKAIGAARAGVIATTFKDETETDLFGEQAVLCGGLTRLIRAGFETLVEAGYPPEMAYFETVHEVKLIVDLIYEAGLKGMRYSISNTAEYGDYTRGDLAVPLEETKRRMREILRQIQSGEFAREWMLENQVGSPVLEANRKRWAAHPIEEVGSRLRAMMPFLKARVMEEVG</sequence>
<name>ILVC_THET8</name>
<reference key="1">
    <citation type="submission" date="2004-11" db="EMBL/GenBank/DDBJ databases">
        <title>Complete genome sequence of Thermus thermophilus HB8.</title>
        <authorList>
            <person name="Masui R."/>
            <person name="Kurokawa K."/>
            <person name="Nakagawa N."/>
            <person name="Tokunaga F."/>
            <person name="Koyama Y."/>
            <person name="Shibata T."/>
            <person name="Oshima T."/>
            <person name="Yokoyama S."/>
            <person name="Yasunaga T."/>
            <person name="Kuramitsu S."/>
        </authorList>
    </citation>
    <scope>NUCLEOTIDE SEQUENCE [LARGE SCALE GENOMIC DNA]</scope>
    <source>
        <strain>ATCC 27634 / DSM 579 / HB8</strain>
    </source>
</reference>